<organism>
    <name type="scientific">Mus musculus</name>
    <name type="common">Mouse</name>
    <dbReference type="NCBI Taxonomy" id="10090"/>
    <lineage>
        <taxon>Eukaryota</taxon>
        <taxon>Metazoa</taxon>
        <taxon>Chordata</taxon>
        <taxon>Craniata</taxon>
        <taxon>Vertebrata</taxon>
        <taxon>Euteleostomi</taxon>
        <taxon>Mammalia</taxon>
        <taxon>Eutheria</taxon>
        <taxon>Euarchontoglires</taxon>
        <taxon>Glires</taxon>
        <taxon>Rodentia</taxon>
        <taxon>Myomorpha</taxon>
        <taxon>Muroidea</taxon>
        <taxon>Muridae</taxon>
        <taxon>Murinae</taxon>
        <taxon>Mus</taxon>
        <taxon>Mus</taxon>
    </lineage>
</organism>
<reference key="1">
    <citation type="journal article" date="2005" name="Science">
        <title>The transcriptional landscape of the mammalian genome.</title>
        <authorList>
            <person name="Carninci P."/>
            <person name="Kasukawa T."/>
            <person name="Katayama S."/>
            <person name="Gough J."/>
            <person name="Frith M.C."/>
            <person name="Maeda N."/>
            <person name="Oyama R."/>
            <person name="Ravasi T."/>
            <person name="Lenhard B."/>
            <person name="Wells C."/>
            <person name="Kodzius R."/>
            <person name="Shimokawa K."/>
            <person name="Bajic V.B."/>
            <person name="Brenner S.E."/>
            <person name="Batalov S."/>
            <person name="Forrest A.R."/>
            <person name="Zavolan M."/>
            <person name="Davis M.J."/>
            <person name="Wilming L.G."/>
            <person name="Aidinis V."/>
            <person name="Allen J.E."/>
            <person name="Ambesi-Impiombato A."/>
            <person name="Apweiler R."/>
            <person name="Aturaliya R.N."/>
            <person name="Bailey T.L."/>
            <person name="Bansal M."/>
            <person name="Baxter L."/>
            <person name="Beisel K.W."/>
            <person name="Bersano T."/>
            <person name="Bono H."/>
            <person name="Chalk A.M."/>
            <person name="Chiu K.P."/>
            <person name="Choudhary V."/>
            <person name="Christoffels A."/>
            <person name="Clutterbuck D.R."/>
            <person name="Crowe M.L."/>
            <person name="Dalla E."/>
            <person name="Dalrymple B.P."/>
            <person name="de Bono B."/>
            <person name="Della Gatta G."/>
            <person name="di Bernardo D."/>
            <person name="Down T."/>
            <person name="Engstrom P."/>
            <person name="Fagiolini M."/>
            <person name="Faulkner G."/>
            <person name="Fletcher C.F."/>
            <person name="Fukushima T."/>
            <person name="Furuno M."/>
            <person name="Futaki S."/>
            <person name="Gariboldi M."/>
            <person name="Georgii-Hemming P."/>
            <person name="Gingeras T.R."/>
            <person name="Gojobori T."/>
            <person name="Green R.E."/>
            <person name="Gustincich S."/>
            <person name="Harbers M."/>
            <person name="Hayashi Y."/>
            <person name="Hensch T.K."/>
            <person name="Hirokawa N."/>
            <person name="Hill D."/>
            <person name="Huminiecki L."/>
            <person name="Iacono M."/>
            <person name="Ikeo K."/>
            <person name="Iwama A."/>
            <person name="Ishikawa T."/>
            <person name="Jakt M."/>
            <person name="Kanapin A."/>
            <person name="Katoh M."/>
            <person name="Kawasawa Y."/>
            <person name="Kelso J."/>
            <person name="Kitamura H."/>
            <person name="Kitano H."/>
            <person name="Kollias G."/>
            <person name="Krishnan S.P."/>
            <person name="Kruger A."/>
            <person name="Kummerfeld S.K."/>
            <person name="Kurochkin I.V."/>
            <person name="Lareau L.F."/>
            <person name="Lazarevic D."/>
            <person name="Lipovich L."/>
            <person name="Liu J."/>
            <person name="Liuni S."/>
            <person name="McWilliam S."/>
            <person name="Madan Babu M."/>
            <person name="Madera M."/>
            <person name="Marchionni L."/>
            <person name="Matsuda H."/>
            <person name="Matsuzawa S."/>
            <person name="Miki H."/>
            <person name="Mignone F."/>
            <person name="Miyake S."/>
            <person name="Morris K."/>
            <person name="Mottagui-Tabar S."/>
            <person name="Mulder N."/>
            <person name="Nakano N."/>
            <person name="Nakauchi H."/>
            <person name="Ng P."/>
            <person name="Nilsson R."/>
            <person name="Nishiguchi S."/>
            <person name="Nishikawa S."/>
            <person name="Nori F."/>
            <person name="Ohara O."/>
            <person name="Okazaki Y."/>
            <person name="Orlando V."/>
            <person name="Pang K.C."/>
            <person name="Pavan W.J."/>
            <person name="Pavesi G."/>
            <person name="Pesole G."/>
            <person name="Petrovsky N."/>
            <person name="Piazza S."/>
            <person name="Reed J."/>
            <person name="Reid J.F."/>
            <person name="Ring B.Z."/>
            <person name="Ringwald M."/>
            <person name="Rost B."/>
            <person name="Ruan Y."/>
            <person name="Salzberg S.L."/>
            <person name="Sandelin A."/>
            <person name="Schneider C."/>
            <person name="Schoenbach C."/>
            <person name="Sekiguchi K."/>
            <person name="Semple C.A."/>
            <person name="Seno S."/>
            <person name="Sessa L."/>
            <person name="Sheng Y."/>
            <person name="Shibata Y."/>
            <person name="Shimada H."/>
            <person name="Shimada K."/>
            <person name="Silva D."/>
            <person name="Sinclair B."/>
            <person name="Sperling S."/>
            <person name="Stupka E."/>
            <person name="Sugiura K."/>
            <person name="Sultana R."/>
            <person name="Takenaka Y."/>
            <person name="Taki K."/>
            <person name="Tammoja K."/>
            <person name="Tan S.L."/>
            <person name="Tang S."/>
            <person name="Taylor M.S."/>
            <person name="Tegner J."/>
            <person name="Teichmann S.A."/>
            <person name="Ueda H.R."/>
            <person name="van Nimwegen E."/>
            <person name="Verardo R."/>
            <person name="Wei C.L."/>
            <person name="Yagi K."/>
            <person name="Yamanishi H."/>
            <person name="Zabarovsky E."/>
            <person name="Zhu S."/>
            <person name="Zimmer A."/>
            <person name="Hide W."/>
            <person name="Bult C."/>
            <person name="Grimmond S.M."/>
            <person name="Teasdale R.D."/>
            <person name="Liu E.T."/>
            <person name="Brusic V."/>
            <person name="Quackenbush J."/>
            <person name="Wahlestedt C."/>
            <person name="Mattick J.S."/>
            <person name="Hume D.A."/>
            <person name="Kai C."/>
            <person name="Sasaki D."/>
            <person name="Tomaru Y."/>
            <person name="Fukuda S."/>
            <person name="Kanamori-Katayama M."/>
            <person name="Suzuki M."/>
            <person name="Aoki J."/>
            <person name="Arakawa T."/>
            <person name="Iida J."/>
            <person name="Imamura K."/>
            <person name="Itoh M."/>
            <person name="Kato T."/>
            <person name="Kawaji H."/>
            <person name="Kawagashira N."/>
            <person name="Kawashima T."/>
            <person name="Kojima M."/>
            <person name="Kondo S."/>
            <person name="Konno H."/>
            <person name="Nakano K."/>
            <person name="Ninomiya N."/>
            <person name="Nishio T."/>
            <person name="Okada M."/>
            <person name="Plessy C."/>
            <person name="Shibata K."/>
            <person name="Shiraki T."/>
            <person name="Suzuki S."/>
            <person name="Tagami M."/>
            <person name="Waki K."/>
            <person name="Watahiki A."/>
            <person name="Okamura-Oho Y."/>
            <person name="Suzuki H."/>
            <person name="Kawai J."/>
            <person name="Hayashizaki Y."/>
        </authorList>
    </citation>
    <scope>NUCLEOTIDE SEQUENCE [LARGE SCALE MRNA] (ISOFORMS 1 AND 2)</scope>
    <source>
        <strain>C57BL/6J</strain>
        <tissue>Blood vessel</tissue>
        <tissue>Corpora quadrigemina</tissue>
    </source>
</reference>
<reference key="2">
    <citation type="journal article" date="2008" name="Proc. Natl. Acad. Sci. U.S.A.">
        <title>Transcriptome-based systematic identification of extracellular matrix proteins.</title>
        <authorList>
            <person name="Manabe R."/>
            <person name="Tsutsui K."/>
            <person name="Yamada T."/>
            <person name="Kimura M."/>
            <person name="Nakano I."/>
            <person name="Shimono C."/>
            <person name="Sanzen N."/>
            <person name="Furutani Y."/>
            <person name="Fukuda T."/>
            <person name="Oguri Y."/>
            <person name="Shimamoto K."/>
            <person name="Kiyozumi D."/>
            <person name="Sato Y."/>
            <person name="Sado Y."/>
            <person name="Senoo H."/>
            <person name="Yamashina S."/>
            <person name="Fukuda S."/>
            <person name="Kawai J."/>
            <person name="Sugiura N."/>
            <person name="Kimata K."/>
            <person name="Hayashizaki Y."/>
            <person name="Sekiguchi K."/>
        </authorList>
    </citation>
    <scope>FUNCTION</scope>
    <scope>SUBCELLULAR LOCATION</scope>
    <scope>DEVELOPMENTAL STAGE</scope>
</reference>
<reference key="3">
    <citation type="journal article" date="2010" name="J. Biol. Chem.">
        <title>ADAMTSL-6 is a novel extracellular matrix protein that binds to fibrillin-1 and promotes fibrillin-1 fibril formation.</title>
        <authorList>
            <person name="Tsutsui K."/>
            <person name="Manabe R."/>
            <person name="Yamada T."/>
            <person name="Nakano I."/>
            <person name="Oguri Y."/>
            <person name="Keene D.R."/>
            <person name="Sengle G."/>
            <person name="Sakai L.Y."/>
            <person name="Sekiguchi K."/>
        </authorList>
    </citation>
    <scope>FUNCTION</scope>
    <scope>INTERACTION WITH FBN1</scope>
    <scope>SUBCELLULAR LOCATION</scope>
    <scope>TISSUE SPECIFICITY</scope>
    <scope>ALTERNATIVE PROMOTER USAGE</scope>
</reference>
<reference key="4">
    <citation type="journal article" date="2011" name="J. Biol. Chem.">
        <title>ADAMTSL6beta protein rescues fibrillin-1 microfibril disorder in a Marfan syndrome mouse model through the promotion of fibrillin-1 assembly.</title>
        <authorList>
            <person name="Saito M."/>
            <person name="Kurokawa M."/>
            <person name="Oda M."/>
            <person name="Oshima M."/>
            <person name="Tsutsui K."/>
            <person name="Kosaka K."/>
            <person name="Nakao K."/>
            <person name="Ogawa M."/>
            <person name="Manabe R."/>
            <person name="Suda N."/>
            <person name="Ganjargal G."/>
            <person name="Hada Y."/>
            <person name="Noguchi T."/>
            <person name="Teranaka T."/>
            <person name="Sekiguchi K."/>
            <person name="Yoneda T."/>
            <person name="Tsuji T."/>
        </authorList>
    </citation>
    <scope>FUNCTION</scope>
    <scope>INTERACTION WITH TGFB1</scope>
    <scope>SUBCELLULAR LOCATION</scope>
    <scope>DEVELOPMENTAL STAGE</scope>
</reference>
<keyword id="KW-0877">Alternative promoter usage</keyword>
<keyword id="KW-0272">Extracellular matrix</keyword>
<keyword id="KW-0378">Hydrolase</keyword>
<keyword id="KW-1185">Reference proteome</keyword>
<keyword id="KW-0677">Repeat</keyword>
<keyword id="KW-0964">Secreted</keyword>
<keyword id="KW-0732">Signal</keyword>
<dbReference type="EMBL" id="AK045414">
    <property type="protein sequence ID" value="BAC32352.1"/>
    <property type="molecule type" value="mRNA"/>
</dbReference>
<dbReference type="EMBL" id="AK138976">
    <property type="protein sequence ID" value="BAE23844.1"/>
    <property type="molecule type" value="mRNA"/>
</dbReference>
<dbReference type="CCDS" id="CCDS23256.1">
    <molecule id="Q3UTY6-2"/>
</dbReference>
<dbReference type="CCDS" id="CCDS40661.1">
    <molecule id="Q3UTY6-1"/>
</dbReference>
<dbReference type="RefSeq" id="NP_001035516.2">
    <molecule id="Q3UTY6-1"/>
    <property type="nucleotide sequence ID" value="NM_001040426.3"/>
</dbReference>
<dbReference type="RefSeq" id="NP_766032.1">
    <molecule id="Q3UTY6-2"/>
    <property type="nucleotide sequence ID" value="NM_172444.4"/>
</dbReference>
<dbReference type="RefSeq" id="XP_006510969.1">
    <molecule id="Q3UTY6-1"/>
    <property type="nucleotide sequence ID" value="XM_006510906.5"/>
</dbReference>
<dbReference type="RefSeq" id="XP_006510970.1">
    <molecule id="Q3UTY6-1"/>
    <property type="nucleotide sequence ID" value="XM_006510907.4"/>
</dbReference>
<dbReference type="RefSeq" id="XP_036010652.1">
    <molecule id="Q3UTY6-1"/>
    <property type="nucleotide sequence ID" value="XM_036154759.1"/>
</dbReference>
<dbReference type="SMR" id="Q3UTY6"/>
<dbReference type="FunCoup" id="Q3UTY6">
    <property type="interactions" value="165"/>
</dbReference>
<dbReference type="STRING" id="10090.ENSMUSP00000096257"/>
<dbReference type="GlyConnect" id="2766">
    <property type="glycosylation" value="2 N-Linked glycans (1 site)"/>
</dbReference>
<dbReference type="GlyCosmos" id="Q3UTY6">
    <property type="glycosylation" value="1 site, 2 glycans"/>
</dbReference>
<dbReference type="GlyGen" id="Q3UTY6">
    <property type="glycosylation" value="3 sites, 4 N-linked glycans (2 sites), 1 O-linked glycan (1 site)"/>
</dbReference>
<dbReference type="iPTMnet" id="Q3UTY6"/>
<dbReference type="PhosphoSitePlus" id="Q3UTY6"/>
<dbReference type="SwissPalm" id="Q3UTY6"/>
<dbReference type="PaxDb" id="10090-ENSMUSP00000096257"/>
<dbReference type="ProteomicsDB" id="262818">
    <molecule id="Q3UTY6-1"/>
</dbReference>
<dbReference type="ProteomicsDB" id="262819">
    <molecule id="Q3UTY6-2"/>
</dbReference>
<dbReference type="Antibodypedia" id="26512">
    <property type="antibodies" value="10 antibodies from 8 providers"/>
</dbReference>
<dbReference type="DNASU" id="207596"/>
<dbReference type="Ensembl" id="ENSMUST00000034829.6">
    <molecule id="Q3UTY6-2"/>
    <property type="protein sequence ID" value="ENSMUSP00000034829.6"/>
    <property type="gene ID" value="ENSMUSG00000032289.16"/>
</dbReference>
<dbReference type="Ensembl" id="ENSMUST00000098660.10">
    <molecule id="Q3UTY6-1"/>
    <property type="protein sequence ID" value="ENSMUSP00000096257.4"/>
    <property type="gene ID" value="ENSMUSG00000032289.16"/>
</dbReference>
<dbReference type="Ensembl" id="ENSMUST00000171654.8">
    <molecule id="Q3UTY6-1"/>
    <property type="protein sequence ID" value="ENSMUSP00000131418.2"/>
    <property type="gene ID" value="ENSMUSG00000032289.16"/>
</dbReference>
<dbReference type="GeneID" id="207596"/>
<dbReference type="KEGG" id="mmu:207596"/>
<dbReference type="UCSC" id="uc009pyx.2">
    <molecule id="Q3UTY6-2"/>
    <property type="organism name" value="mouse"/>
</dbReference>
<dbReference type="UCSC" id="uc009pyy.2">
    <molecule id="Q3UTY6-1"/>
    <property type="organism name" value="mouse"/>
</dbReference>
<dbReference type="AGR" id="MGI:2672033"/>
<dbReference type="CTD" id="79875"/>
<dbReference type="MGI" id="MGI:2672033">
    <property type="gene designation" value="Thsd4"/>
</dbReference>
<dbReference type="VEuPathDB" id="HostDB:ENSMUSG00000032289"/>
<dbReference type="eggNOG" id="KOG3538">
    <property type="taxonomic scope" value="Eukaryota"/>
</dbReference>
<dbReference type="eggNOG" id="KOG4597">
    <property type="taxonomic scope" value="Eukaryota"/>
</dbReference>
<dbReference type="GeneTree" id="ENSGT00940000156594"/>
<dbReference type="HOGENOM" id="CLU_000660_6_0_1"/>
<dbReference type="InParanoid" id="Q3UTY6"/>
<dbReference type="OMA" id="SQRRCMH"/>
<dbReference type="OrthoDB" id="10062690at2759"/>
<dbReference type="PhylomeDB" id="Q3UTY6"/>
<dbReference type="TreeFam" id="TF316874"/>
<dbReference type="Reactome" id="R-MMU-5173214">
    <property type="pathway name" value="O-glycosylation of TSR domain-containing proteins"/>
</dbReference>
<dbReference type="BioGRID-ORCS" id="207596">
    <property type="hits" value="1 hit in 78 CRISPR screens"/>
</dbReference>
<dbReference type="ChiTaRS" id="Thsd4">
    <property type="organism name" value="mouse"/>
</dbReference>
<dbReference type="PRO" id="PR:Q3UTY6"/>
<dbReference type="Proteomes" id="UP000000589">
    <property type="component" value="Chromosome 9"/>
</dbReference>
<dbReference type="RNAct" id="Q3UTY6">
    <property type="molecule type" value="protein"/>
</dbReference>
<dbReference type="Bgee" id="ENSMUSG00000032289">
    <property type="expression patterns" value="Expressed in ascending aorta and 150 other cell types or tissues"/>
</dbReference>
<dbReference type="ExpressionAtlas" id="Q3UTY6">
    <property type="expression patterns" value="baseline and differential"/>
</dbReference>
<dbReference type="GO" id="GO:0031012">
    <property type="term" value="C:extracellular matrix"/>
    <property type="evidence" value="ECO:0000314"/>
    <property type="project" value="MGI"/>
</dbReference>
<dbReference type="GO" id="GO:0005576">
    <property type="term" value="C:extracellular region"/>
    <property type="evidence" value="ECO:0007669"/>
    <property type="project" value="UniProtKB-SubCell"/>
</dbReference>
<dbReference type="GO" id="GO:0001527">
    <property type="term" value="C:microfibril"/>
    <property type="evidence" value="ECO:0000314"/>
    <property type="project" value="MGI"/>
</dbReference>
<dbReference type="GO" id="GO:0016787">
    <property type="term" value="F:hydrolase activity"/>
    <property type="evidence" value="ECO:0007669"/>
    <property type="project" value="UniProtKB-KW"/>
</dbReference>
<dbReference type="GO" id="GO:0048251">
    <property type="term" value="P:elastic fiber assembly"/>
    <property type="evidence" value="ECO:0000314"/>
    <property type="project" value="MGI"/>
</dbReference>
<dbReference type="GO" id="GO:0160054">
    <property type="term" value="P:microfibril assembly"/>
    <property type="evidence" value="ECO:0000250"/>
    <property type="project" value="UniProtKB"/>
</dbReference>
<dbReference type="FunFam" id="2.60.120.830:FF:000001">
    <property type="entry name" value="A disintegrin and metalloproteinase with thrombospondin motifs 1"/>
    <property type="match status" value="1"/>
</dbReference>
<dbReference type="FunFam" id="2.20.100.10:FF:000005">
    <property type="entry name" value="ADAM metallopeptidase with thrombospondin type 1 motif 9"/>
    <property type="match status" value="1"/>
</dbReference>
<dbReference type="FunFam" id="2.20.100.10:FF:000044">
    <property type="entry name" value="Thrombospondin type 1 domain containing 4"/>
    <property type="match status" value="1"/>
</dbReference>
<dbReference type="FunFam" id="2.20.100.10:FF:000047">
    <property type="entry name" value="Thrombospondin type 1 domain containing 4"/>
    <property type="match status" value="1"/>
</dbReference>
<dbReference type="FunFam" id="2.20.100.10:FF:000023">
    <property type="entry name" value="Thrombospondin type-1 domain-containing protein 4"/>
    <property type="match status" value="1"/>
</dbReference>
<dbReference type="FunFam" id="2.20.100.10:FF:000039">
    <property type="entry name" value="thrombospondin type-1 domain-containing protein 4"/>
    <property type="match status" value="1"/>
</dbReference>
<dbReference type="Gene3D" id="2.60.120.830">
    <property type="match status" value="1"/>
</dbReference>
<dbReference type="Gene3D" id="2.20.100.10">
    <property type="entry name" value="Thrombospondin type-1 (TSP1) repeat"/>
    <property type="match status" value="7"/>
</dbReference>
<dbReference type="InterPro" id="IPR050439">
    <property type="entry name" value="ADAMTS_ADAMTS-like"/>
</dbReference>
<dbReference type="InterPro" id="IPR045371">
    <property type="entry name" value="ADAMTS_CR_3"/>
</dbReference>
<dbReference type="InterPro" id="IPR010294">
    <property type="entry name" value="ADAMTS_spacer1"/>
</dbReference>
<dbReference type="InterPro" id="IPR010909">
    <property type="entry name" value="PLAC"/>
</dbReference>
<dbReference type="InterPro" id="IPR000884">
    <property type="entry name" value="TSP1_rpt"/>
</dbReference>
<dbReference type="InterPro" id="IPR036383">
    <property type="entry name" value="TSP1_rpt_sf"/>
</dbReference>
<dbReference type="PANTHER" id="PTHR13723">
    <property type="entry name" value="ADAMTS A DISINTEGRIN AND METALLOPROTEASE WITH THROMBOSPONDIN MOTIFS PROTEASE"/>
    <property type="match status" value="1"/>
</dbReference>
<dbReference type="PANTHER" id="PTHR13723:SF16">
    <property type="entry name" value="THROMBOSPONDIN TYPE-1 DOMAIN-CONTAINING PROTEIN 4"/>
    <property type="match status" value="1"/>
</dbReference>
<dbReference type="Pfam" id="PF19236">
    <property type="entry name" value="ADAMTS_CR_3"/>
    <property type="match status" value="1"/>
</dbReference>
<dbReference type="Pfam" id="PF05986">
    <property type="entry name" value="ADAMTS_spacer1"/>
    <property type="match status" value="1"/>
</dbReference>
<dbReference type="Pfam" id="PF08686">
    <property type="entry name" value="PLAC"/>
    <property type="match status" value="1"/>
</dbReference>
<dbReference type="Pfam" id="PF19030">
    <property type="entry name" value="TSP1_ADAMTS"/>
    <property type="match status" value="6"/>
</dbReference>
<dbReference type="Pfam" id="PF00090">
    <property type="entry name" value="TSP_1"/>
    <property type="match status" value="1"/>
</dbReference>
<dbReference type="SMART" id="SM00209">
    <property type="entry name" value="TSP1"/>
    <property type="match status" value="7"/>
</dbReference>
<dbReference type="SUPFAM" id="SSF82895">
    <property type="entry name" value="TSP-1 type 1 repeat"/>
    <property type="match status" value="7"/>
</dbReference>
<dbReference type="PROSITE" id="PS50900">
    <property type="entry name" value="PLAC"/>
    <property type="match status" value="1"/>
</dbReference>
<dbReference type="PROSITE" id="PS50092">
    <property type="entry name" value="TSP1"/>
    <property type="match status" value="6"/>
</dbReference>
<sequence length="1018" mass="113243">MVSYLTSCLSALSTLLLLLGSQLVCPQPSTEHRKVPQRMAVTEGTPEDSGSGSPGVWGSWGPWSACSRSCSGGVMEQTRPCLPSSYRARGGSRPNGRALSITGHVVSAVRTSVPLHRSQEDQRALAGSNASRQGPAVVRGSRHPQARGREPSERRSRTRGPIGPGKYGYGKAPYILPLQTDTTHTPQRLRRQRPSSRHSRSQEASASKQGYRPPTHQFSHSQPLYQSDSGPRSGLPPSEASIYQLPLTHDQSYPAASSLFHRPELSSHHGARPHGAAQAFPQHLRSTAISCIGAYRQYKLCNTNACPESGRSIREVQCASYNNKPFMGRFYEWEPFAEVKGNRKCELNCQATGYRFYVRQAEKVIDGTPCDQNGTAICVSGQCKSIGCDDFLGSDKVLDKCGVCGGDNTGCQVVSGVFKHALTSLGYHRVVEIPQGATKINITEMHKSNNYLALRSRSGRSIINGNWAIDRPGKYEGGGTMFTYKRPNEVSSTAGESFLAEGPTNEILDVYMIHQQPNPGVHYEYVIMRNNAISPQVPPHRRPGEPFNGQLEEEDRGQEDREEREKNQEKEDSQVEAPEVFTSESTQTFPVRHPERFPSHRPDNLVPPAPQPPRRSRDHNWKQLGTTECSTTCGKGSQYPIFRCVHRNTHEEVPESYCDSSMKPTPEEEPCNLFPCPAFWDIGEWSECSKTCGLGMQHRQVLCRQVYANRSLTVQPYRCQHLEKPETTSTCQLKICSEWQIRTDWTSCSVPCGVGQRTRDVKCVSNIGDMVHDEECNMKLRPNDIENCDMGPCAKSWFLTEWSERCSAECGAGVRTRSVVCMTNHVSSLPLEGCGNNRPVEATPCDNGPCTGKVEWFTGSWSQCSIECGSGTQQREVICVRKNADTFEVLDPYECSFLEKPPSQQACHLKPCGAKWFSTEWSMCSKSCQGGFRVREVRCLSDDMTPSSLCDPQLKPEERESCNTQDCVPEVDENCKDKYYNCNVVVQARLCVYNYYKTACCASCTRVANRHVGFLGSR</sequence>
<feature type="signal peptide" evidence="1">
    <location>
        <begin position="1"/>
        <end position="26"/>
    </location>
</feature>
<feature type="chain" id="PRO_0000313584" description="Thrombospondin type-1 domain-containing protein 4">
    <location>
        <begin position="27"/>
        <end position="1018"/>
    </location>
</feature>
<feature type="domain" description="TSP type-1 1" evidence="2">
    <location>
        <begin position="54"/>
        <end position="307"/>
    </location>
</feature>
<feature type="domain" description="TSP type-1 2" evidence="2">
    <location>
        <begin position="676"/>
        <end position="737"/>
    </location>
</feature>
<feature type="domain" description="TSP type-1 3" evidence="2">
    <location>
        <begin position="739"/>
        <end position="792"/>
    </location>
</feature>
<feature type="domain" description="TSP type-1 4" evidence="2">
    <location>
        <begin position="793"/>
        <end position="851"/>
    </location>
</feature>
<feature type="domain" description="TSP type-1 5" evidence="2">
    <location>
        <begin position="852"/>
        <end position="911"/>
    </location>
</feature>
<feature type="domain" description="TSP type-1 6" evidence="2">
    <location>
        <begin position="912"/>
        <end position="968"/>
    </location>
</feature>
<feature type="domain" description="PLAC" evidence="3">
    <location>
        <begin position="971"/>
        <end position="1008"/>
    </location>
</feature>
<feature type="region of interest" description="Disordered" evidence="4">
    <location>
        <begin position="34"/>
        <end position="56"/>
    </location>
</feature>
<feature type="region of interest" description="Disordered" evidence="4">
    <location>
        <begin position="116"/>
        <end position="240"/>
    </location>
</feature>
<feature type="region of interest" description="Disordered" evidence="4">
    <location>
        <begin position="534"/>
        <end position="623"/>
    </location>
</feature>
<feature type="compositionally biased region" description="Basic residues" evidence="4">
    <location>
        <begin position="187"/>
        <end position="199"/>
    </location>
</feature>
<feature type="compositionally biased region" description="Polar residues" evidence="4">
    <location>
        <begin position="216"/>
        <end position="230"/>
    </location>
</feature>
<feature type="compositionally biased region" description="Basic and acidic residues" evidence="4">
    <location>
        <begin position="558"/>
        <end position="573"/>
    </location>
</feature>
<feature type="compositionally biased region" description="Basic and acidic residues" evidence="4">
    <location>
        <begin position="592"/>
        <end position="603"/>
    </location>
</feature>
<feature type="splice variant" id="VSP_030042" description="In isoform 2." evidence="8">
    <location>
        <begin position="1"/>
        <end position="360"/>
    </location>
</feature>
<feature type="splice variant" id="VSP_030043" description="In isoform 2." evidence="8">
    <original>AEKVIDGTPCDQNGTAICVSGQCK</original>
    <variation>MFVSYLLLTLFHTETAMLARPGGE</variation>
    <location>
        <begin position="361"/>
        <end position="384"/>
    </location>
</feature>
<feature type="sequence conflict" description="In Ref. 1; BAE23844." evidence="9" ref="1">
    <original>R</original>
    <variation>Q</variation>
    <location>
        <position position="486"/>
    </location>
</feature>
<feature type="sequence conflict" description="In Ref. 1; BAE23844." evidence="9" ref="1">
    <original>E</original>
    <variation>K</variation>
    <location>
        <position position="571"/>
    </location>
</feature>
<gene>
    <name type="primary">Thsd4</name>
</gene>
<evidence type="ECO:0000255" key="1"/>
<evidence type="ECO:0000255" key="2">
    <source>
        <dbReference type="PROSITE-ProRule" id="PRU00210"/>
    </source>
</evidence>
<evidence type="ECO:0000255" key="3">
    <source>
        <dbReference type="PROSITE-ProRule" id="PRU00233"/>
    </source>
</evidence>
<evidence type="ECO:0000256" key="4">
    <source>
        <dbReference type="SAM" id="MobiDB-lite"/>
    </source>
</evidence>
<evidence type="ECO:0000269" key="5">
    <source>
    </source>
</evidence>
<evidence type="ECO:0000269" key="6">
    <source>
    </source>
</evidence>
<evidence type="ECO:0000269" key="7">
    <source>
    </source>
</evidence>
<evidence type="ECO:0000303" key="8">
    <source>
    </source>
</evidence>
<evidence type="ECO:0000305" key="9"/>
<accession>Q3UTY6</accession>
<accession>Q8BLE5</accession>
<name>THSD4_MOUSE</name>
<proteinExistence type="evidence at protein level"/>
<comment type="function">
    <text evidence="5 6 7">Promotes FBN1 matrix assembly. Attenuates TGFB signaling, possibly by accelerating the sequestration of large latent complexes of TGFB or active TGFB by FBN1 microfibril assembly, thereby negatively regulating the expression of TGFB regulatory targets, such as POSTN.</text>
</comment>
<comment type="subunit">
    <text evidence="6 7">Isoform 2 interacts with FBN1. Isoform 2 may interact with TGFB1.</text>
</comment>
<comment type="subcellular location">
    <molecule>Isoform 1</molecule>
    <subcellularLocation>
        <location evidence="5 6">Secreted</location>
        <location evidence="5 6">Extracellular space</location>
        <location evidence="5 6">Extracellular matrix</location>
    </subcellularLocation>
    <text evidence="6">Mostly deposited into pericellular fibrillar matrices (PubMed:19940141). Colocalizes with FBN1 (PubMed:19940141).</text>
</comment>
<comment type="subcellular location">
    <molecule>Isoform 2</molecule>
    <subcellularLocation>
        <location evidence="6">Secreted</location>
    </subcellularLocation>
    <subcellularLocation>
        <location evidence="5 6">Secreted</location>
        <location evidence="5 6">Extracellular space</location>
        <location evidence="5 6">Extracellular matrix</location>
    </subcellularLocation>
    <text evidence="6 7">Mostly secreted in the extracellular milieu (PubMed:19940141). In the pericellular fibrillar matrix, colocalizes with FBN1 (PubMed:19940141, PubMed:21880733).</text>
</comment>
<comment type="alternative products">
    <event type="alternative promoter"/>
    <isoform>
        <id>Q3UTY6-1</id>
        <name>1</name>
        <name>ADAMTSL6-alpha</name>
        <sequence type="displayed"/>
    </isoform>
    <isoform>
        <id>Q3UTY6-2</id>
        <name>2</name>
        <name>ADAMTSL6-beta</name>
        <sequence type="described" ref="VSP_030042 VSP_030043"/>
    </isoform>
</comment>
<comment type="tissue specificity">
    <text evidence="6">Both isoforms are expressed in the embryo from 7 dpc through 17. Isoform 1 is widely expressed in adult tissues. Isoform 2 is detected in brain, spinal cord, eye, kidney, stomach and uterus. Mainly observed in fibrillar extracellular matrices in elastic tissues (at protein level).</text>
</comment>
<comment type="developmental stage">
    <text evidence="5 7">At 16.5 dpc, detected in fibrillar structures in various elastic tissues, including developing dermis, perichondria surrounding cartilages and the vessel walls of aortae (at protein level). At postnatal day 7 (P7), weakly expressed in the early stage dental follicle, but becomes readily detectable in assembled microfibril-like structures during the periodontal ligament-forming stage of the dental follicle and in organized microfibrils in the adult periodontal ligament (P35) (at protein level). Up-regulated in the periodontal ligament during wound healing (at protein level).</text>
</comment>
<protein>
    <recommendedName>
        <fullName>Thrombospondin type-1 domain-containing protein 4</fullName>
    </recommendedName>
    <alternativeName>
        <fullName>A disintegrin and metalloproteinase with thrombospondin motifs-like protein 6</fullName>
        <shortName>ADAMTS-like protein 6</shortName>
        <shortName>ADAMTSL-6</shortName>
    </alternativeName>
    <alternativeName>
        <fullName>ADAMTS-like protein 4</fullName>
        <shortName>ADAMTSL-4</shortName>
    </alternativeName>
</protein>